<comment type="similarity">
    <text evidence="3">Belongs to the FHIP family.</text>
</comment>
<evidence type="ECO:0000250" key="1"/>
<evidence type="ECO:0000256" key="2">
    <source>
        <dbReference type="SAM" id="MobiDB-lite"/>
    </source>
</evidence>
<evidence type="ECO:0000305" key="3"/>
<feature type="chain" id="PRO_0000379010" description="FHIP family protein GI14169">
    <location>
        <begin position="1"/>
        <end position="1066"/>
    </location>
</feature>
<feature type="region of interest" description="Disordered" evidence="2">
    <location>
        <begin position="1"/>
        <end position="35"/>
    </location>
</feature>
<feature type="region of interest" description="Disordered" evidence="2">
    <location>
        <begin position="651"/>
        <end position="682"/>
    </location>
</feature>
<feature type="region of interest" description="Disordered" evidence="2">
    <location>
        <begin position="821"/>
        <end position="913"/>
    </location>
</feature>
<feature type="region of interest" description="Disordered" evidence="2">
    <location>
        <begin position="935"/>
        <end position="1007"/>
    </location>
</feature>
<feature type="compositionally biased region" description="Polar residues" evidence="2">
    <location>
        <begin position="1"/>
        <end position="11"/>
    </location>
</feature>
<feature type="compositionally biased region" description="Low complexity" evidence="2">
    <location>
        <begin position="12"/>
        <end position="30"/>
    </location>
</feature>
<feature type="compositionally biased region" description="Low complexity" evidence="2">
    <location>
        <begin position="655"/>
        <end position="678"/>
    </location>
</feature>
<feature type="compositionally biased region" description="Low complexity" evidence="2">
    <location>
        <begin position="822"/>
        <end position="855"/>
    </location>
</feature>
<feature type="compositionally biased region" description="Polar residues" evidence="2">
    <location>
        <begin position="856"/>
        <end position="874"/>
    </location>
</feature>
<feature type="compositionally biased region" description="Low complexity" evidence="2">
    <location>
        <begin position="890"/>
        <end position="913"/>
    </location>
</feature>
<feature type="compositionally biased region" description="Polar residues" evidence="2">
    <location>
        <begin position="947"/>
        <end position="971"/>
    </location>
</feature>
<feature type="compositionally biased region" description="Low complexity" evidence="2">
    <location>
        <begin position="972"/>
        <end position="997"/>
    </location>
</feature>
<feature type="modified residue" description="Phosphoserine" evidence="1">
    <location>
        <position position="500"/>
    </location>
</feature>
<feature type="modified residue" description="Phosphoserine" evidence="1">
    <location>
        <position position="820"/>
    </location>
</feature>
<keyword id="KW-0597">Phosphoprotein</keyword>
<keyword id="KW-1185">Reference proteome</keyword>
<organism>
    <name type="scientific">Drosophila mojavensis</name>
    <name type="common">Fruit fly</name>
    <dbReference type="NCBI Taxonomy" id="7230"/>
    <lineage>
        <taxon>Eukaryota</taxon>
        <taxon>Metazoa</taxon>
        <taxon>Ecdysozoa</taxon>
        <taxon>Arthropoda</taxon>
        <taxon>Hexapoda</taxon>
        <taxon>Insecta</taxon>
        <taxon>Pterygota</taxon>
        <taxon>Neoptera</taxon>
        <taxon>Endopterygota</taxon>
        <taxon>Diptera</taxon>
        <taxon>Brachycera</taxon>
        <taxon>Muscomorpha</taxon>
        <taxon>Ephydroidea</taxon>
        <taxon>Drosophilidae</taxon>
        <taxon>Drosophila</taxon>
    </lineage>
</organism>
<gene>
    <name type="ORF">GI14169</name>
</gene>
<protein>
    <recommendedName>
        <fullName>FHIP family protein GI14169</fullName>
    </recommendedName>
</protein>
<reference key="1">
    <citation type="journal article" date="2007" name="Nature">
        <title>Evolution of genes and genomes on the Drosophila phylogeny.</title>
        <authorList>
            <consortium name="Drosophila 12 genomes consortium"/>
        </authorList>
    </citation>
    <scope>NUCLEOTIDE SEQUENCE [LARGE SCALE GENOMIC DNA]</scope>
    <source>
        <strain>Tucson 15081-1352.22</strain>
    </source>
</reference>
<proteinExistence type="inferred from homology"/>
<name>U518_DROMO</name>
<accession>B4KJS5</accession>
<dbReference type="EMBL" id="CH933807">
    <property type="protein sequence ID" value="EDW11520.1"/>
    <property type="molecule type" value="Genomic_DNA"/>
</dbReference>
<dbReference type="SMR" id="B4KJS5"/>
<dbReference type="FunCoup" id="B4KJS5">
    <property type="interactions" value="68"/>
</dbReference>
<dbReference type="EnsemblMetazoa" id="FBtr0164894">
    <property type="protein sequence ID" value="FBpp0163386"/>
    <property type="gene ID" value="FBgn0136922"/>
</dbReference>
<dbReference type="EnsemblMetazoa" id="XM_002002042.4">
    <property type="protein sequence ID" value="XP_002002078.2"/>
    <property type="gene ID" value="LOC6576075"/>
</dbReference>
<dbReference type="GeneID" id="6576075"/>
<dbReference type="eggNOG" id="KOG3695">
    <property type="taxonomic scope" value="Eukaryota"/>
</dbReference>
<dbReference type="HOGENOM" id="CLU_007807_0_0_1"/>
<dbReference type="InParanoid" id="B4KJS5"/>
<dbReference type="OMA" id="RMPSLVQ"/>
<dbReference type="OrthoDB" id="6287422at2759"/>
<dbReference type="PhylomeDB" id="B4KJS5"/>
<dbReference type="Proteomes" id="UP000009192">
    <property type="component" value="Unassembled WGS sequence"/>
</dbReference>
<dbReference type="InterPro" id="IPR019384">
    <property type="entry name" value="FHIP"/>
</dbReference>
<dbReference type="InterPro" id="IPR045669">
    <property type="entry name" value="FHIP_C"/>
</dbReference>
<dbReference type="InterPro" id="IPR045668">
    <property type="entry name" value="FHIP_KELAA_motif"/>
</dbReference>
<dbReference type="PANTHER" id="PTHR21705:SF11">
    <property type="entry name" value="FHIP FAMILY PROTEIN CG3558"/>
    <property type="match status" value="1"/>
</dbReference>
<dbReference type="PANTHER" id="PTHR21705">
    <property type="entry name" value="RAI16 PROTEIN-RELATED"/>
    <property type="match status" value="1"/>
</dbReference>
<dbReference type="Pfam" id="PF19314">
    <property type="entry name" value="DUF5917"/>
    <property type="match status" value="1"/>
</dbReference>
<dbReference type="Pfam" id="PF19311">
    <property type="entry name" value="KELAA"/>
    <property type="match status" value="1"/>
</dbReference>
<dbReference type="Pfam" id="PF10257">
    <property type="entry name" value="RAI16-like"/>
    <property type="match status" value="1"/>
</dbReference>
<sequence>MSWLRTSPLRQSLTRSGSSSGNGSSGTATTMRQRPIDAATDCDPRACYDSFCKHWQQAHEIIQHPGTPTHDDVLGVVSHLDYMVTLLLVELHHCNKVSLPSADAAPPAAPCLEYLLSENLLDKLYEWASSTGRYANAVRLEQLKLYELLVSHSRHQLLCHEPFLRPLLKILASSQGEIFPPDLEKRLVILLNQLCVVLMQNVHLLDLFFFSAQTQVQEQIQNGSLPAPKSGTTTNFIIFSLLIPYVHREGSLGHQARDALLLCMALSQKNSNIGHYIAQYSSICPLLVTGLGGLYSRLPNSIEINSIDWHRITPDDVTEIPELTLFMNALEFCNAVVQVAHEMIKQQLLDFMYQGFIVPVLGPAILQTNIDSQISAMSYLDLILRSITEPGLMRAFVKFLLDTEKFDGERILDALVERLHSPDANLCMVTMALFDTLLGLHCEDLMLELLLKYMLPGKHVPISHRHKINKIDPYLNTTEFFLELTPDVMKRARDLARPKSVQELVDPAATATTTATAPSMLLSLPSPVMSKTIGANWNYYGHYTGDSLYANVQAYLFEAHSRIAQCQRDCRKWANSYRYQKWPRQGQARATAHALELARQFFSEFGTAAPVVAAPVASEAGEKQLDSLQSIGESSGYESFKWRPADEDAEGIDVTTTTTASASDTDLEHNNNSSSISSGRRDSWRISHSSRNEILLTDLDFSEDLFAQGTVSLGPFLNAIWSKLQTFTSNSLYVNLHLTGLITRLAWYPLPLIHSLLLRSDIAITSDTPSFHQVLRMLKQQIDAELPVAENSLEIIDVARSYLIDREFRLVNARKITDNSPLHQQLQHQQQHQQLAQTNSHTQQQQQQQQQQAQQRSTYATLSAATPVQASPTSAYDPFRRSDNKRRSISRSITSMFSRRSTSSTPASNGNSASSGLSQIYAFFTGAASTLVGGSGGEGSGARGAAQDSTRGNTCETSLSTAPRQEPQTNVGSSSNSSIGSSTQTLSGTHSSSTLHGVESGLQTGNFNSEPVSLDSVASMGIIANTSGTERSRDLALCAVLLDEWLKELAAVALEQSVVLVTEQLL</sequence>